<keyword id="KW-0028">Amino-acid biosynthesis</keyword>
<keyword id="KW-0368">Histidine biosynthesis</keyword>
<keyword id="KW-0378">Hydrolase</keyword>
<keyword id="KW-0486">Methionine biosynthesis</keyword>
<keyword id="KW-0511">Multifunctional enzyme</keyword>
<keyword id="KW-0521">NADP</keyword>
<keyword id="KW-0554">One-carbon metabolism</keyword>
<keyword id="KW-0560">Oxidoreductase</keyword>
<keyword id="KW-0658">Purine biosynthesis</keyword>
<keyword id="KW-1185">Reference proteome</keyword>
<name>FOLD_CERS4</name>
<reference key="1">
    <citation type="submission" date="2005-09" db="EMBL/GenBank/DDBJ databases">
        <title>Complete sequence of chromosome 1 of Rhodobacter sphaeroides 2.4.1.</title>
        <authorList>
            <person name="Copeland A."/>
            <person name="Lucas S."/>
            <person name="Lapidus A."/>
            <person name="Barry K."/>
            <person name="Detter J.C."/>
            <person name="Glavina T."/>
            <person name="Hammon N."/>
            <person name="Israni S."/>
            <person name="Pitluck S."/>
            <person name="Richardson P."/>
            <person name="Mackenzie C."/>
            <person name="Choudhary M."/>
            <person name="Larimer F."/>
            <person name="Hauser L.J."/>
            <person name="Land M."/>
            <person name="Donohue T.J."/>
            <person name="Kaplan S."/>
        </authorList>
    </citation>
    <scope>NUCLEOTIDE SEQUENCE [LARGE SCALE GENOMIC DNA]</scope>
    <source>
        <strain>ATCC 17023 / DSM 158 / JCM 6121 / CCUG 31486 / LMG 2827 / NBRC 12203 / NCIMB 8253 / ATH 2.4.1.</strain>
    </source>
</reference>
<evidence type="ECO:0000255" key="1">
    <source>
        <dbReference type="HAMAP-Rule" id="MF_01576"/>
    </source>
</evidence>
<comment type="function">
    <text evidence="1">Catalyzes the oxidation of 5,10-methylenetetrahydrofolate to 5,10-methenyltetrahydrofolate and then the hydrolysis of 5,10-methenyltetrahydrofolate to 10-formyltetrahydrofolate.</text>
</comment>
<comment type="catalytic activity">
    <reaction evidence="1">
        <text>(6R)-5,10-methylene-5,6,7,8-tetrahydrofolate + NADP(+) = (6R)-5,10-methenyltetrahydrofolate + NADPH</text>
        <dbReference type="Rhea" id="RHEA:22812"/>
        <dbReference type="ChEBI" id="CHEBI:15636"/>
        <dbReference type="ChEBI" id="CHEBI:57455"/>
        <dbReference type="ChEBI" id="CHEBI:57783"/>
        <dbReference type="ChEBI" id="CHEBI:58349"/>
        <dbReference type="EC" id="1.5.1.5"/>
    </reaction>
</comment>
<comment type="catalytic activity">
    <reaction evidence="1">
        <text>(6R)-5,10-methenyltetrahydrofolate + H2O = (6R)-10-formyltetrahydrofolate + H(+)</text>
        <dbReference type="Rhea" id="RHEA:23700"/>
        <dbReference type="ChEBI" id="CHEBI:15377"/>
        <dbReference type="ChEBI" id="CHEBI:15378"/>
        <dbReference type="ChEBI" id="CHEBI:57455"/>
        <dbReference type="ChEBI" id="CHEBI:195366"/>
        <dbReference type="EC" id="3.5.4.9"/>
    </reaction>
</comment>
<comment type="pathway">
    <text evidence="1">One-carbon metabolism; tetrahydrofolate interconversion.</text>
</comment>
<comment type="subunit">
    <text evidence="1">Homodimer.</text>
</comment>
<comment type="similarity">
    <text evidence="1">Belongs to the tetrahydrofolate dehydrogenase/cyclohydrolase family.</text>
</comment>
<sequence length="296" mass="30467">MTAKRIDGKAFAAGVRARVAEEVARLKEGHGIVPGLAVVLVGEDPASQVYVGAKGKQTVEVGMASFEHRLPAGTSEAELLALIDRLNHDPAVHGILVQLPLPAHLNADLVINALDPAKDVDGFHISNVGRLGTGQKSMVPCTPLGCLMMLRDHLGALSGLNAVVVGRSNIVGKPMAQLLLGESCTVTIAHSRTRDLAAVCRGADILVAAVGRPEMITGDFVKPGATVIDVGINRIERDGKTKLVGDVDYASAAEVAGAITPVPGGVGPMTIACLLANTLTACCRANGLPEPQGLTA</sequence>
<protein>
    <recommendedName>
        <fullName evidence="1">Bifunctional protein FolD</fullName>
    </recommendedName>
    <domain>
        <recommendedName>
            <fullName evidence="1">Methylenetetrahydrofolate dehydrogenase</fullName>
            <ecNumber evidence="1">1.5.1.5</ecNumber>
        </recommendedName>
    </domain>
    <domain>
        <recommendedName>
            <fullName evidence="1">Methenyltetrahydrofolate cyclohydrolase</fullName>
            <ecNumber evidence="1">3.5.4.9</ecNumber>
        </recommendedName>
    </domain>
</protein>
<organism>
    <name type="scientific">Cereibacter sphaeroides (strain ATCC 17023 / DSM 158 / JCM 6121 / CCUG 31486 / LMG 2827 / NBRC 12203 / NCIMB 8253 / ATH 2.4.1.)</name>
    <name type="common">Rhodobacter sphaeroides</name>
    <dbReference type="NCBI Taxonomy" id="272943"/>
    <lineage>
        <taxon>Bacteria</taxon>
        <taxon>Pseudomonadati</taxon>
        <taxon>Pseudomonadota</taxon>
        <taxon>Alphaproteobacteria</taxon>
        <taxon>Rhodobacterales</taxon>
        <taxon>Paracoccaceae</taxon>
        <taxon>Cereibacter</taxon>
    </lineage>
</organism>
<accession>Q3J049</accession>
<gene>
    <name evidence="1" type="primary">folD</name>
    <name type="ordered locus">RHOS4_22670</name>
    <name type="ORF">RSP_0661</name>
</gene>
<proteinExistence type="inferred from homology"/>
<dbReference type="EC" id="1.5.1.5" evidence="1"/>
<dbReference type="EC" id="3.5.4.9" evidence="1"/>
<dbReference type="EMBL" id="CP000143">
    <property type="protein sequence ID" value="ABA79835.1"/>
    <property type="molecule type" value="Genomic_DNA"/>
</dbReference>
<dbReference type="RefSeq" id="WP_011338398.1">
    <property type="nucleotide sequence ID" value="NC_007493.2"/>
</dbReference>
<dbReference type="RefSeq" id="YP_353736.1">
    <property type="nucleotide sequence ID" value="NC_007493.2"/>
</dbReference>
<dbReference type="SMR" id="Q3J049"/>
<dbReference type="STRING" id="272943.RSP_0661"/>
<dbReference type="EnsemblBacteria" id="ABA79835">
    <property type="protein sequence ID" value="ABA79835"/>
    <property type="gene ID" value="RSP_0661"/>
</dbReference>
<dbReference type="GeneID" id="3718271"/>
<dbReference type="KEGG" id="rsp:RSP_0661"/>
<dbReference type="PATRIC" id="fig|272943.9.peg.2611"/>
<dbReference type="eggNOG" id="COG0190">
    <property type="taxonomic scope" value="Bacteria"/>
</dbReference>
<dbReference type="OrthoDB" id="9803580at2"/>
<dbReference type="PhylomeDB" id="Q3J049"/>
<dbReference type="UniPathway" id="UPA00193"/>
<dbReference type="Proteomes" id="UP000002703">
    <property type="component" value="Chromosome 1"/>
</dbReference>
<dbReference type="GO" id="GO:0005829">
    <property type="term" value="C:cytosol"/>
    <property type="evidence" value="ECO:0007669"/>
    <property type="project" value="TreeGrafter"/>
</dbReference>
<dbReference type="GO" id="GO:0004477">
    <property type="term" value="F:methenyltetrahydrofolate cyclohydrolase activity"/>
    <property type="evidence" value="ECO:0007669"/>
    <property type="project" value="UniProtKB-UniRule"/>
</dbReference>
<dbReference type="GO" id="GO:0004488">
    <property type="term" value="F:methylenetetrahydrofolate dehydrogenase (NADP+) activity"/>
    <property type="evidence" value="ECO:0007669"/>
    <property type="project" value="UniProtKB-UniRule"/>
</dbReference>
<dbReference type="GO" id="GO:0000105">
    <property type="term" value="P:L-histidine biosynthetic process"/>
    <property type="evidence" value="ECO:0007669"/>
    <property type="project" value="UniProtKB-KW"/>
</dbReference>
<dbReference type="GO" id="GO:0009086">
    <property type="term" value="P:methionine biosynthetic process"/>
    <property type="evidence" value="ECO:0007669"/>
    <property type="project" value="UniProtKB-KW"/>
</dbReference>
<dbReference type="GO" id="GO:0006164">
    <property type="term" value="P:purine nucleotide biosynthetic process"/>
    <property type="evidence" value="ECO:0007669"/>
    <property type="project" value="UniProtKB-KW"/>
</dbReference>
<dbReference type="GO" id="GO:0035999">
    <property type="term" value="P:tetrahydrofolate interconversion"/>
    <property type="evidence" value="ECO:0007669"/>
    <property type="project" value="UniProtKB-UniRule"/>
</dbReference>
<dbReference type="CDD" id="cd01080">
    <property type="entry name" value="NAD_bind_m-THF_DH_Cyclohyd"/>
    <property type="match status" value="1"/>
</dbReference>
<dbReference type="FunFam" id="3.40.50.720:FF:000006">
    <property type="entry name" value="Bifunctional protein FolD"/>
    <property type="match status" value="1"/>
</dbReference>
<dbReference type="FunFam" id="3.40.50.10860:FF:000005">
    <property type="entry name" value="C-1-tetrahydrofolate synthase, cytoplasmic, putative"/>
    <property type="match status" value="1"/>
</dbReference>
<dbReference type="Gene3D" id="3.40.50.10860">
    <property type="entry name" value="Leucine Dehydrogenase, chain A, domain 1"/>
    <property type="match status" value="1"/>
</dbReference>
<dbReference type="Gene3D" id="3.40.50.720">
    <property type="entry name" value="NAD(P)-binding Rossmann-like Domain"/>
    <property type="match status" value="1"/>
</dbReference>
<dbReference type="HAMAP" id="MF_01576">
    <property type="entry name" value="THF_DHG_CYH"/>
    <property type="match status" value="1"/>
</dbReference>
<dbReference type="InterPro" id="IPR046346">
    <property type="entry name" value="Aminoacid_DH-like_N_sf"/>
</dbReference>
<dbReference type="InterPro" id="IPR036291">
    <property type="entry name" value="NAD(P)-bd_dom_sf"/>
</dbReference>
<dbReference type="InterPro" id="IPR000672">
    <property type="entry name" value="THF_DH/CycHdrlase"/>
</dbReference>
<dbReference type="InterPro" id="IPR020630">
    <property type="entry name" value="THF_DH/CycHdrlase_cat_dom"/>
</dbReference>
<dbReference type="InterPro" id="IPR020867">
    <property type="entry name" value="THF_DH/CycHdrlase_CS"/>
</dbReference>
<dbReference type="InterPro" id="IPR020631">
    <property type="entry name" value="THF_DH/CycHdrlase_NAD-bd_dom"/>
</dbReference>
<dbReference type="NCBIfam" id="NF008058">
    <property type="entry name" value="PRK10792.1"/>
    <property type="match status" value="1"/>
</dbReference>
<dbReference type="NCBIfam" id="NF010783">
    <property type="entry name" value="PRK14186.1"/>
    <property type="match status" value="1"/>
</dbReference>
<dbReference type="NCBIfam" id="NF010785">
    <property type="entry name" value="PRK14188.1"/>
    <property type="match status" value="1"/>
</dbReference>
<dbReference type="PANTHER" id="PTHR48099:SF5">
    <property type="entry name" value="C-1-TETRAHYDROFOLATE SYNTHASE, CYTOPLASMIC"/>
    <property type="match status" value="1"/>
</dbReference>
<dbReference type="PANTHER" id="PTHR48099">
    <property type="entry name" value="C-1-TETRAHYDROFOLATE SYNTHASE, CYTOPLASMIC-RELATED"/>
    <property type="match status" value="1"/>
</dbReference>
<dbReference type="Pfam" id="PF00763">
    <property type="entry name" value="THF_DHG_CYH"/>
    <property type="match status" value="1"/>
</dbReference>
<dbReference type="Pfam" id="PF02882">
    <property type="entry name" value="THF_DHG_CYH_C"/>
    <property type="match status" value="1"/>
</dbReference>
<dbReference type="PRINTS" id="PR00085">
    <property type="entry name" value="THFDHDRGNASE"/>
</dbReference>
<dbReference type="SUPFAM" id="SSF53223">
    <property type="entry name" value="Aminoacid dehydrogenase-like, N-terminal domain"/>
    <property type="match status" value="1"/>
</dbReference>
<dbReference type="SUPFAM" id="SSF51735">
    <property type="entry name" value="NAD(P)-binding Rossmann-fold domains"/>
    <property type="match status" value="1"/>
</dbReference>
<dbReference type="PROSITE" id="PS00766">
    <property type="entry name" value="THF_DHG_CYH_1"/>
    <property type="match status" value="1"/>
</dbReference>
<dbReference type="PROSITE" id="PS00767">
    <property type="entry name" value="THF_DHG_CYH_2"/>
    <property type="match status" value="1"/>
</dbReference>
<feature type="chain" id="PRO_0000268469" description="Bifunctional protein FolD">
    <location>
        <begin position="1"/>
        <end position="296"/>
    </location>
</feature>
<feature type="binding site" evidence="1">
    <location>
        <begin position="166"/>
        <end position="168"/>
    </location>
    <ligand>
        <name>NADP(+)</name>
        <dbReference type="ChEBI" id="CHEBI:58349"/>
    </ligand>
</feature>
<feature type="binding site" evidence="1">
    <location>
        <position position="191"/>
    </location>
    <ligand>
        <name>NADP(+)</name>
        <dbReference type="ChEBI" id="CHEBI:58349"/>
    </ligand>
</feature>
<feature type="binding site" evidence="1">
    <location>
        <position position="232"/>
    </location>
    <ligand>
        <name>NADP(+)</name>
        <dbReference type="ChEBI" id="CHEBI:58349"/>
    </ligand>
</feature>